<gene>
    <name type="primary">PPARD</name>
    <name type="synonym">NR1C2</name>
    <name type="synonym">PPARB</name>
</gene>
<name>PPARD_CANLF</name>
<sequence length="441" mass="49776">MEQPPGEAAEVREEEEKKEVAEAEGAPELNGGPERSLPSSSYTDLSRSSSPPSLLDQLQMGGDGASCGSLNMECRVCGDKASGFHYGVHACEGCKGFFRRTIRMKLEYEKCERICKIQKKNRNKCQYCRFQKCVALGMSHNAIRFGRMPEAEKRKLVAGLTANEGTQHNPQVADLKAFSKHIYNAYLKNFNMTKKKARGILTGKASHTAPFVIHDIETLWQAEKGLVWKQLVNGLPPYKEISVHVFYRCQCTTVETVRELTEFAKSIPSFSNLFLNDQVTLLKYGVHEAIFAMLASIVNKDGLLVANGTGFVTREFLRSLRKPFSDIIEPKFEFAVKFNALELDDSDLALFIAAIILCGDRPGLINVPQVEAIQDTILRALEFHLQANHPYAQYLFPKLLQKMADLRQLVTEHAQMMQRIKKTETETSLHPLLQEIYKDMY</sequence>
<reference key="1">
    <citation type="submission" date="2006-05" db="EMBL/GenBank/DDBJ databases">
        <authorList>
            <person name="Nishii N."/>
            <person name="Takasu M."/>
            <person name="Soe O."/>
            <person name="Maeda S."/>
            <person name="Ohba Y."/>
            <person name="Kitagawa H."/>
        </authorList>
    </citation>
    <scope>NUCLEOTIDE SEQUENCE [MRNA]</scope>
</reference>
<organism>
    <name type="scientific">Canis lupus familiaris</name>
    <name type="common">Dog</name>
    <name type="synonym">Canis familiaris</name>
    <dbReference type="NCBI Taxonomy" id="9615"/>
    <lineage>
        <taxon>Eukaryota</taxon>
        <taxon>Metazoa</taxon>
        <taxon>Chordata</taxon>
        <taxon>Craniata</taxon>
        <taxon>Vertebrata</taxon>
        <taxon>Euteleostomi</taxon>
        <taxon>Mammalia</taxon>
        <taxon>Eutheria</taxon>
        <taxon>Laurasiatheria</taxon>
        <taxon>Carnivora</taxon>
        <taxon>Caniformia</taxon>
        <taxon>Canidae</taxon>
        <taxon>Canis</taxon>
    </lineage>
</organism>
<feature type="chain" id="PRO_0000250457" description="Peroxisome proliferator-activated receptor delta">
    <location>
        <begin position="1"/>
        <end position="441"/>
    </location>
</feature>
<feature type="domain" description="NR LBD" evidence="4">
    <location>
        <begin position="211"/>
        <end position="439"/>
    </location>
</feature>
<feature type="DNA-binding region" description="Nuclear receptor" evidence="3">
    <location>
        <begin position="70"/>
        <end position="145"/>
    </location>
</feature>
<feature type="zinc finger region" description="NR C4-type" evidence="3">
    <location>
        <begin position="74"/>
        <end position="94"/>
    </location>
</feature>
<feature type="zinc finger region" description="NR C4-type" evidence="3">
    <location>
        <begin position="111"/>
        <end position="133"/>
    </location>
</feature>
<feature type="region of interest" description="Disordered" evidence="5">
    <location>
        <begin position="1"/>
        <end position="58"/>
    </location>
</feature>
<feature type="compositionally biased region" description="Basic and acidic residues" evidence="5">
    <location>
        <begin position="9"/>
        <end position="21"/>
    </location>
</feature>
<feature type="compositionally biased region" description="Low complexity" evidence="5">
    <location>
        <begin position="36"/>
        <end position="55"/>
    </location>
</feature>
<evidence type="ECO:0000250" key="1">
    <source>
        <dbReference type="UniProtKB" id="P35396"/>
    </source>
</evidence>
<evidence type="ECO:0000250" key="2">
    <source>
        <dbReference type="UniProtKB" id="Q03181"/>
    </source>
</evidence>
<evidence type="ECO:0000255" key="3">
    <source>
        <dbReference type="PROSITE-ProRule" id="PRU00407"/>
    </source>
</evidence>
<evidence type="ECO:0000255" key="4">
    <source>
        <dbReference type="PROSITE-ProRule" id="PRU01189"/>
    </source>
</evidence>
<evidence type="ECO:0000256" key="5">
    <source>
        <dbReference type="SAM" id="MobiDB-lite"/>
    </source>
</evidence>
<evidence type="ECO:0000305" key="6"/>
<accession>Q0ZAQ8</accession>
<dbReference type="EMBL" id="DQ648277">
    <property type="protein sequence ID" value="ABG36929.1"/>
    <property type="molecule type" value="mRNA"/>
</dbReference>
<dbReference type="RefSeq" id="NP_001041567.1">
    <property type="nucleotide sequence ID" value="NM_001048102.1"/>
</dbReference>
<dbReference type="RefSeq" id="XP_005627131.1">
    <property type="nucleotide sequence ID" value="XM_005627074.2"/>
</dbReference>
<dbReference type="RefSeq" id="XP_005627132.1">
    <property type="nucleotide sequence ID" value="XM_005627075.2"/>
</dbReference>
<dbReference type="RefSeq" id="XP_005627134.1">
    <property type="nucleotide sequence ID" value="XM_005627077.2"/>
</dbReference>
<dbReference type="RefSeq" id="XP_038538684.1">
    <property type="nucleotide sequence ID" value="XM_038682756.1"/>
</dbReference>
<dbReference type="RefSeq" id="XP_038538685.1">
    <property type="nucleotide sequence ID" value="XM_038682757.1"/>
</dbReference>
<dbReference type="RefSeq" id="XP_038538686.1">
    <property type="nucleotide sequence ID" value="XM_038682758.1"/>
</dbReference>
<dbReference type="RefSeq" id="XP_038538687.1">
    <property type="nucleotide sequence ID" value="XM_038682759.1"/>
</dbReference>
<dbReference type="RefSeq" id="XP_038538688.1">
    <property type="nucleotide sequence ID" value="XM_038682760.1"/>
</dbReference>
<dbReference type="SMR" id="Q0ZAQ8"/>
<dbReference type="FunCoup" id="Q0ZAQ8">
    <property type="interactions" value="182"/>
</dbReference>
<dbReference type="STRING" id="9615.ENSCAFP00000052536"/>
<dbReference type="BindingDB" id="Q0ZAQ8"/>
<dbReference type="ChEMBL" id="CHEMBL1932904"/>
<dbReference type="PaxDb" id="9612-ENSCAFP00000001880"/>
<dbReference type="Ensembl" id="ENSCAFT00030028553.1">
    <property type="protein sequence ID" value="ENSCAFP00030024904.1"/>
    <property type="gene ID" value="ENSCAFG00030015370.1"/>
</dbReference>
<dbReference type="Ensembl" id="ENSCAFT00040029299.1">
    <property type="protein sequence ID" value="ENSCAFP00040025452.1"/>
    <property type="gene ID" value="ENSCAFG00040015805.1"/>
</dbReference>
<dbReference type="GeneID" id="481756"/>
<dbReference type="KEGG" id="cfa:481756"/>
<dbReference type="CTD" id="5467"/>
<dbReference type="eggNOG" id="KOG3575">
    <property type="taxonomic scope" value="Eukaryota"/>
</dbReference>
<dbReference type="HOGENOM" id="CLU_007368_4_1_1"/>
<dbReference type="InParanoid" id="Q0ZAQ8"/>
<dbReference type="OMA" id="YEKCDRS"/>
<dbReference type="OrthoDB" id="7634782at2759"/>
<dbReference type="TreeFam" id="TF316304"/>
<dbReference type="Reactome" id="R-CFA-200425">
    <property type="pathway name" value="Carnitine shuttle"/>
</dbReference>
<dbReference type="Reactome" id="R-CFA-383280">
    <property type="pathway name" value="Nuclear Receptor transcription pathway"/>
</dbReference>
<dbReference type="Reactome" id="R-CFA-5362517">
    <property type="pathway name" value="Signaling by Retinoic Acid"/>
</dbReference>
<dbReference type="PRO" id="PR:Q0ZAQ8"/>
<dbReference type="Proteomes" id="UP000002254">
    <property type="component" value="Unplaced"/>
</dbReference>
<dbReference type="Proteomes" id="UP000694429">
    <property type="component" value="Chromosome 12"/>
</dbReference>
<dbReference type="Proteomes" id="UP000694542">
    <property type="component" value="Chromosome 12"/>
</dbReference>
<dbReference type="Proteomes" id="UP000805418">
    <property type="component" value="Unplaced"/>
</dbReference>
<dbReference type="Bgee" id="ENSCAFG00000001310">
    <property type="expression patterns" value="Expressed in placenta and 47 other cell types or tissues"/>
</dbReference>
<dbReference type="GO" id="GO:0005634">
    <property type="term" value="C:nucleus"/>
    <property type="evidence" value="ECO:0000318"/>
    <property type="project" value="GO_Central"/>
</dbReference>
<dbReference type="GO" id="GO:0001227">
    <property type="term" value="F:DNA-binding transcription repressor activity, RNA polymerase II-specific"/>
    <property type="evidence" value="ECO:0000318"/>
    <property type="project" value="GO_Central"/>
</dbReference>
<dbReference type="GO" id="GO:0070539">
    <property type="term" value="F:linoleic acid binding"/>
    <property type="evidence" value="ECO:0000250"/>
    <property type="project" value="UniProtKB"/>
</dbReference>
<dbReference type="GO" id="GO:0008289">
    <property type="term" value="F:lipid binding"/>
    <property type="evidence" value="ECO:0000250"/>
    <property type="project" value="UniProtKB"/>
</dbReference>
<dbReference type="GO" id="GO:0004879">
    <property type="term" value="F:nuclear receptor activity"/>
    <property type="evidence" value="ECO:0000250"/>
    <property type="project" value="UniProtKB"/>
</dbReference>
<dbReference type="GO" id="GO:0000978">
    <property type="term" value="F:RNA polymerase II cis-regulatory region sequence-specific DNA binding"/>
    <property type="evidence" value="ECO:0000318"/>
    <property type="project" value="GO_Central"/>
</dbReference>
<dbReference type="GO" id="GO:0008270">
    <property type="term" value="F:zinc ion binding"/>
    <property type="evidence" value="ECO:0007669"/>
    <property type="project" value="UniProtKB-KW"/>
</dbReference>
<dbReference type="GO" id="GO:0030154">
    <property type="term" value="P:cell differentiation"/>
    <property type="evidence" value="ECO:0000318"/>
    <property type="project" value="GO_Central"/>
</dbReference>
<dbReference type="GO" id="GO:0006631">
    <property type="term" value="P:fatty acid metabolic process"/>
    <property type="evidence" value="ECO:0000318"/>
    <property type="project" value="GO_Central"/>
</dbReference>
<dbReference type="GO" id="GO:0009755">
    <property type="term" value="P:hormone-mediated signaling pathway"/>
    <property type="evidence" value="ECO:0000318"/>
    <property type="project" value="GO_Central"/>
</dbReference>
<dbReference type="GO" id="GO:0030522">
    <property type="term" value="P:intracellular receptor signaling pathway"/>
    <property type="evidence" value="ECO:0000318"/>
    <property type="project" value="GO_Central"/>
</dbReference>
<dbReference type="GO" id="GO:0010887">
    <property type="term" value="P:negative regulation of cholesterol storage"/>
    <property type="evidence" value="ECO:0000318"/>
    <property type="project" value="GO_Central"/>
</dbReference>
<dbReference type="GO" id="GO:0050728">
    <property type="term" value="P:negative regulation of inflammatory response"/>
    <property type="evidence" value="ECO:0000318"/>
    <property type="project" value="GO_Central"/>
</dbReference>
<dbReference type="GO" id="GO:0000122">
    <property type="term" value="P:negative regulation of transcription by RNA polymerase II"/>
    <property type="evidence" value="ECO:0000318"/>
    <property type="project" value="GO_Central"/>
</dbReference>
<dbReference type="GO" id="GO:0045893">
    <property type="term" value="P:positive regulation of DNA-templated transcription"/>
    <property type="evidence" value="ECO:0000250"/>
    <property type="project" value="UniProtKB"/>
</dbReference>
<dbReference type="GO" id="GO:0045923">
    <property type="term" value="P:positive regulation of fatty acid metabolic process"/>
    <property type="evidence" value="ECO:0000318"/>
    <property type="project" value="GO_Central"/>
</dbReference>
<dbReference type="GO" id="GO:0045944">
    <property type="term" value="P:positive regulation of transcription by RNA polymerase II"/>
    <property type="evidence" value="ECO:0000318"/>
    <property type="project" value="GO_Central"/>
</dbReference>
<dbReference type="CDD" id="cd06965">
    <property type="entry name" value="NR_DBD_Ppar"/>
    <property type="match status" value="1"/>
</dbReference>
<dbReference type="CDD" id="cd06932">
    <property type="entry name" value="NR_LBD_PPAR"/>
    <property type="match status" value="1"/>
</dbReference>
<dbReference type="FunFam" id="1.10.565.10:FF:000013">
    <property type="entry name" value="Peroxisome proliferator-activated receptor delta"/>
    <property type="match status" value="1"/>
</dbReference>
<dbReference type="FunFam" id="3.30.50.10:FF:000010">
    <property type="entry name" value="Peroxisome proliferator-activated receptor gamma"/>
    <property type="match status" value="1"/>
</dbReference>
<dbReference type="Gene3D" id="3.30.50.10">
    <property type="entry name" value="Erythroid Transcription Factor GATA-1, subunit A"/>
    <property type="match status" value="1"/>
</dbReference>
<dbReference type="Gene3D" id="1.10.565.10">
    <property type="entry name" value="Retinoid X Receptor"/>
    <property type="match status" value="1"/>
</dbReference>
<dbReference type="InterPro" id="IPR003074">
    <property type="entry name" value="1Cnucl_rcpt"/>
</dbReference>
<dbReference type="InterPro" id="IPR003075">
    <property type="entry name" value="1Cnucl_rcpt_B"/>
</dbReference>
<dbReference type="InterPro" id="IPR035500">
    <property type="entry name" value="NHR-like_dom_sf"/>
</dbReference>
<dbReference type="InterPro" id="IPR000536">
    <property type="entry name" value="Nucl_hrmn_rcpt_lig-bd"/>
</dbReference>
<dbReference type="InterPro" id="IPR050234">
    <property type="entry name" value="Nuclear_hormone_rcpt_NR1"/>
</dbReference>
<dbReference type="InterPro" id="IPR001723">
    <property type="entry name" value="Nuclear_hrmn_rcpt"/>
</dbReference>
<dbReference type="InterPro" id="IPR001628">
    <property type="entry name" value="Znf_hrmn_rcpt"/>
</dbReference>
<dbReference type="InterPro" id="IPR013088">
    <property type="entry name" value="Znf_NHR/GATA"/>
</dbReference>
<dbReference type="PANTHER" id="PTHR24082">
    <property type="entry name" value="NUCLEAR HORMONE RECEPTOR"/>
    <property type="match status" value="1"/>
</dbReference>
<dbReference type="PANTHER" id="PTHR24082:SF15">
    <property type="entry name" value="PEROXISOME PROLIFERATOR-ACTIVATED RECEPTOR DELTA"/>
    <property type="match status" value="1"/>
</dbReference>
<dbReference type="Pfam" id="PF00104">
    <property type="entry name" value="Hormone_recep"/>
    <property type="match status" value="1"/>
</dbReference>
<dbReference type="Pfam" id="PF00105">
    <property type="entry name" value="zf-C4"/>
    <property type="match status" value="1"/>
</dbReference>
<dbReference type="PRINTS" id="PR01288">
    <property type="entry name" value="PROXISOMEPAR"/>
</dbReference>
<dbReference type="PRINTS" id="PR01290">
    <property type="entry name" value="PROXISOMPABR"/>
</dbReference>
<dbReference type="PRINTS" id="PR00398">
    <property type="entry name" value="STRDHORMONER"/>
</dbReference>
<dbReference type="PRINTS" id="PR00047">
    <property type="entry name" value="STROIDFINGER"/>
</dbReference>
<dbReference type="SMART" id="SM00430">
    <property type="entry name" value="HOLI"/>
    <property type="match status" value="1"/>
</dbReference>
<dbReference type="SMART" id="SM00399">
    <property type="entry name" value="ZnF_C4"/>
    <property type="match status" value="1"/>
</dbReference>
<dbReference type="SUPFAM" id="SSF57716">
    <property type="entry name" value="Glucocorticoid receptor-like (DNA-binding domain)"/>
    <property type="match status" value="1"/>
</dbReference>
<dbReference type="SUPFAM" id="SSF48508">
    <property type="entry name" value="Nuclear receptor ligand-binding domain"/>
    <property type="match status" value="1"/>
</dbReference>
<dbReference type="PROSITE" id="PS51843">
    <property type="entry name" value="NR_LBD"/>
    <property type="match status" value="1"/>
</dbReference>
<dbReference type="PROSITE" id="PS00031">
    <property type="entry name" value="NUCLEAR_REC_DBD_1"/>
    <property type="match status" value="1"/>
</dbReference>
<dbReference type="PROSITE" id="PS51030">
    <property type="entry name" value="NUCLEAR_REC_DBD_2"/>
    <property type="match status" value="1"/>
</dbReference>
<protein>
    <recommendedName>
        <fullName>Peroxisome proliferator-activated receptor delta</fullName>
        <shortName>PPAR-delta</shortName>
    </recommendedName>
    <alternativeName>
        <fullName>Nuclear receptor subfamily 1 group C member 2</fullName>
    </alternativeName>
    <alternativeName>
        <fullName>Peroxisome proliferator-activated receptor beta</fullName>
        <shortName>PPAR-beta</shortName>
    </alternativeName>
</protein>
<proteinExistence type="evidence at transcript level"/>
<comment type="function">
    <text evidence="2">Ligand-activated transcription factor key mediator of energy metabolism in adipose tissues. Receptor that binds peroxisome proliferators such as hypolipidemic drugs and fatty acids. Has a preference for poly-unsaturated fatty acids, such as gamma-linoleic acid and eicosapentanoic acid. Once activated by a ligand, the receptor binds to promoter elements of target genes. Regulates the peroxisomal beta-oxidation pathway of fatty acids. Functions as a transcription activator for the acyl-CoA oxidase gene. Decreases expression of NPC1L1 once activated by a ligand.</text>
</comment>
<comment type="subunit">
    <text evidence="1 2">Heterodimer with the retinoid X receptor (By similarity). Interacts (via domain NR LBD) with CRY1 and CRY2 in a ligand-dependent manner (By similarity).</text>
</comment>
<comment type="subcellular location">
    <subcellularLocation>
        <location evidence="2">Nucleus</location>
    </subcellularLocation>
</comment>
<comment type="PTM">
    <text evidence="2">'Lys-48'-linked polyubiquitinated; leading to proteasomal degradation. Deubiquitinated and stabilized by OTUD3.</text>
</comment>
<comment type="similarity">
    <text evidence="6">Belongs to the nuclear hormone receptor family. NR1 subfamily.</text>
</comment>
<keyword id="KW-0010">Activator</keyword>
<keyword id="KW-0238">DNA-binding</keyword>
<keyword id="KW-0479">Metal-binding</keyword>
<keyword id="KW-0539">Nucleus</keyword>
<keyword id="KW-0675">Receptor</keyword>
<keyword id="KW-1185">Reference proteome</keyword>
<keyword id="KW-0804">Transcription</keyword>
<keyword id="KW-0805">Transcription regulation</keyword>
<keyword id="KW-0832">Ubl conjugation</keyword>
<keyword id="KW-0862">Zinc</keyword>
<keyword id="KW-0863">Zinc-finger</keyword>